<name>MTGA_BURM1</name>
<sequence>MVAVTGTQRTRVVSPTRWIVYAGAVFAAAWLATQLFYFVQIAMWSFVNPGSTAFMRTDAWWLSHDTPPAQIQHQWVPYDKISRNLKRAIIASEDATFATNNGYDVDAILQAWEKNKARGRIVAGGSTITQQLARNLFLSREKSYIRKGQELIITWMLETLLDKERIFEIYLNSVEWGRGVYGAEAAARYYYRIPASRLGAWQSARLAVMLPKPRWFDAHRGSAYQAQRAAIIARRMGAAELPQSE</sequence>
<gene>
    <name evidence="1" type="primary">mtgA</name>
    <name type="ordered locus">Bmul_2771</name>
    <name type="ordered locus">BMULJ_00466</name>
</gene>
<comment type="function">
    <text evidence="1">Peptidoglycan polymerase that catalyzes glycan chain elongation from lipid-linked precursors.</text>
</comment>
<comment type="catalytic activity">
    <reaction evidence="1">
        <text>[GlcNAc-(1-&gt;4)-Mur2Ac(oyl-L-Ala-gamma-D-Glu-L-Lys-D-Ala-D-Ala)](n)-di-trans,octa-cis-undecaprenyl diphosphate + beta-D-GlcNAc-(1-&gt;4)-Mur2Ac(oyl-L-Ala-gamma-D-Glu-L-Lys-D-Ala-D-Ala)-di-trans,octa-cis-undecaprenyl diphosphate = [GlcNAc-(1-&gt;4)-Mur2Ac(oyl-L-Ala-gamma-D-Glu-L-Lys-D-Ala-D-Ala)](n+1)-di-trans,octa-cis-undecaprenyl diphosphate + di-trans,octa-cis-undecaprenyl diphosphate + H(+)</text>
        <dbReference type="Rhea" id="RHEA:23708"/>
        <dbReference type="Rhea" id="RHEA-COMP:9602"/>
        <dbReference type="Rhea" id="RHEA-COMP:9603"/>
        <dbReference type="ChEBI" id="CHEBI:15378"/>
        <dbReference type="ChEBI" id="CHEBI:58405"/>
        <dbReference type="ChEBI" id="CHEBI:60033"/>
        <dbReference type="ChEBI" id="CHEBI:78435"/>
        <dbReference type="EC" id="2.4.99.28"/>
    </reaction>
</comment>
<comment type="pathway">
    <text evidence="1">Cell wall biogenesis; peptidoglycan biosynthesis.</text>
</comment>
<comment type="subcellular location">
    <subcellularLocation>
        <location evidence="1">Cell inner membrane</location>
        <topology evidence="1">Single-pass membrane protein</topology>
    </subcellularLocation>
</comment>
<comment type="similarity">
    <text evidence="1">Belongs to the glycosyltransferase 51 family.</text>
</comment>
<protein>
    <recommendedName>
        <fullName evidence="1">Biosynthetic peptidoglycan transglycosylase</fullName>
        <ecNumber evidence="1">2.4.99.28</ecNumber>
    </recommendedName>
    <alternativeName>
        <fullName evidence="1">Glycan polymerase</fullName>
    </alternativeName>
    <alternativeName>
        <fullName evidence="1">Peptidoglycan glycosyltransferase MtgA</fullName>
        <shortName evidence="1">PGT</shortName>
    </alternativeName>
</protein>
<dbReference type="EC" id="2.4.99.28" evidence="1"/>
<dbReference type="EMBL" id="CP000868">
    <property type="protein sequence ID" value="ABX16455.1"/>
    <property type="molecule type" value="Genomic_DNA"/>
</dbReference>
<dbReference type="EMBL" id="AP009385">
    <property type="protein sequence ID" value="BAG42433.1"/>
    <property type="molecule type" value="Genomic_DNA"/>
</dbReference>
<dbReference type="RefSeq" id="WP_012214149.1">
    <property type="nucleotide sequence ID" value="NC_010084.1"/>
</dbReference>
<dbReference type="SMR" id="A9AI31"/>
<dbReference type="STRING" id="395019.BMULJ_00466"/>
<dbReference type="CAZy" id="GT51">
    <property type="family name" value="Glycosyltransferase Family 51"/>
</dbReference>
<dbReference type="GeneID" id="89568895"/>
<dbReference type="KEGG" id="bmj:BMULJ_00466"/>
<dbReference type="KEGG" id="bmu:Bmul_2771"/>
<dbReference type="eggNOG" id="COG0744">
    <property type="taxonomic scope" value="Bacteria"/>
</dbReference>
<dbReference type="HOGENOM" id="CLU_006354_1_0_4"/>
<dbReference type="UniPathway" id="UPA00219"/>
<dbReference type="Proteomes" id="UP000008815">
    <property type="component" value="Chromosome 1"/>
</dbReference>
<dbReference type="GO" id="GO:0009274">
    <property type="term" value="C:peptidoglycan-based cell wall"/>
    <property type="evidence" value="ECO:0007669"/>
    <property type="project" value="InterPro"/>
</dbReference>
<dbReference type="GO" id="GO:0005886">
    <property type="term" value="C:plasma membrane"/>
    <property type="evidence" value="ECO:0007669"/>
    <property type="project" value="UniProtKB-SubCell"/>
</dbReference>
<dbReference type="GO" id="GO:0016763">
    <property type="term" value="F:pentosyltransferase activity"/>
    <property type="evidence" value="ECO:0007669"/>
    <property type="project" value="InterPro"/>
</dbReference>
<dbReference type="GO" id="GO:0008955">
    <property type="term" value="F:peptidoglycan glycosyltransferase activity"/>
    <property type="evidence" value="ECO:0007669"/>
    <property type="project" value="UniProtKB-UniRule"/>
</dbReference>
<dbReference type="GO" id="GO:0071555">
    <property type="term" value="P:cell wall organization"/>
    <property type="evidence" value="ECO:0007669"/>
    <property type="project" value="UniProtKB-KW"/>
</dbReference>
<dbReference type="GO" id="GO:0009252">
    <property type="term" value="P:peptidoglycan biosynthetic process"/>
    <property type="evidence" value="ECO:0007669"/>
    <property type="project" value="UniProtKB-UniRule"/>
</dbReference>
<dbReference type="GO" id="GO:0008360">
    <property type="term" value="P:regulation of cell shape"/>
    <property type="evidence" value="ECO:0007669"/>
    <property type="project" value="UniProtKB-KW"/>
</dbReference>
<dbReference type="Gene3D" id="1.10.3810.10">
    <property type="entry name" value="Biosynthetic peptidoglycan transglycosylase-like"/>
    <property type="match status" value="1"/>
</dbReference>
<dbReference type="HAMAP" id="MF_00766">
    <property type="entry name" value="PGT_MtgA"/>
    <property type="match status" value="1"/>
</dbReference>
<dbReference type="InterPro" id="IPR001264">
    <property type="entry name" value="Glyco_trans_51"/>
</dbReference>
<dbReference type="InterPro" id="IPR023346">
    <property type="entry name" value="Lysozyme-like_dom_sf"/>
</dbReference>
<dbReference type="InterPro" id="IPR036950">
    <property type="entry name" value="PBP_transglycosylase"/>
</dbReference>
<dbReference type="InterPro" id="IPR011812">
    <property type="entry name" value="Pep_trsgly"/>
</dbReference>
<dbReference type="NCBIfam" id="TIGR02070">
    <property type="entry name" value="mono_pep_trsgly"/>
    <property type="match status" value="1"/>
</dbReference>
<dbReference type="PANTHER" id="PTHR30400:SF0">
    <property type="entry name" value="BIOSYNTHETIC PEPTIDOGLYCAN TRANSGLYCOSYLASE"/>
    <property type="match status" value="1"/>
</dbReference>
<dbReference type="PANTHER" id="PTHR30400">
    <property type="entry name" value="MONOFUNCTIONAL BIOSYNTHETIC PEPTIDOGLYCAN TRANSGLYCOSYLASE"/>
    <property type="match status" value="1"/>
</dbReference>
<dbReference type="Pfam" id="PF00912">
    <property type="entry name" value="Transgly"/>
    <property type="match status" value="1"/>
</dbReference>
<dbReference type="SUPFAM" id="SSF53955">
    <property type="entry name" value="Lysozyme-like"/>
    <property type="match status" value="1"/>
</dbReference>
<accession>A9AI31</accession>
<keyword id="KW-0997">Cell inner membrane</keyword>
<keyword id="KW-1003">Cell membrane</keyword>
<keyword id="KW-0133">Cell shape</keyword>
<keyword id="KW-0961">Cell wall biogenesis/degradation</keyword>
<keyword id="KW-0328">Glycosyltransferase</keyword>
<keyword id="KW-0472">Membrane</keyword>
<keyword id="KW-0573">Peptidoglycan synthesis</keyword>
<keyword id="KW-1185">Reference proteome</keyword>
<keyword id="KW-0808">Transferase</keyword>
<keyword id="KW-0812">Transmembrane</keyword>
<keyword id="KW-1133">Transmembrane helix</keyword>
<reference key="1">
    <citation type="submission" date="2007-10" db="EMBL/GenBank/DDBJ databases">
        <title>Complete sequence of chromosome 1 of Burkholderia multivorans ATCC 17616.</title>
        <authorList>
            <person name="Copeland A."/>
            <person name="Lucas S."/>
            <person name="Lapidus A."/>
            <person name="Barry K."/>
            <person name="Glavina del Rio T."/>
            <person name="Dalin E."/>
            <person name="Tice H."/>
            <person name="Pitluck S."/>
            <person name="Chain P."/>
            <person name="Malfatti S."/>
            <person name="Shin M."/>
            <person name="Vergez L."/>
            <person name="Schmutz J."/>
            <person name="Larimer F."/>
            <person name="Land M."/>
            <person name="Hauser L."/>
            <person name="Kyrpides N."/>
            <person name="Kim E."/>
            <person name="Tiedje J."/>
            <person name="Richardson P."/>
        </authorList>
    </citation>
    <scope>NUCLEOTIDE SEQUENCE [LARGE SCALE GENOMIC DNA]</scope>
    <source>
        <strain>ATCC 17616 / 249</strain>
    </source>
</reference>
<reference key="2">
    <citation type="submission" date="2007-04" db="EMBL/GenBank/DDBJ databases">
        <title>Complete genome sequence of Burkholderia multivorans ATCC 17616.</title>
        <authorList>
            <person name="Ohtsubo Y."/>
            <person name="Yamashita A."/>
            <person name="Kurokawa K."/>
            <person name="Takami H."/>
            <person name="Yuhara S."/>
            <person name="Nishiyama E."/>
            <person name="Endo R."/>
            <person name="Miyazaki R."/>
            <person name="Ono A."/>
            <person name="Yano K."/>
            <person name="Ito M."/>
            <person name="Sota M."/>
            <person name="Yuji N."/>
            <person name="Hattori M."/>
            <person name="Tsuda M."/>
        </authorList>
    </citation>
    <scope>NUCLEOTIDE SEQUENCE [LARGE SCALE GENOMIC DNA]</scope>
    <source>
        <strain>ATCC 17616 / 249</strain>
    </source>
</reference>
<proteinExistence type="inferred from homology"/>
<organism>
    <name type="scientific">Burkholderia multivorans (strain ATCC 17616 / 249)</name>
    <dbReference type="NCBI Taxonomy" id="395019"/>
    <lineage>
        <taxon>Bacteria</taxon>
        <taxon>Pseudomonadati</taxon>
        <taxon>Pseudomonadota</taxon>
        <taxon>Betaproteobacteria</taxon>
        <taxon>Burkholderiales</taxon>
        <taxon>Burkholderiaceae</taxon>
        <taxon>Burkholderia</taxon>
        <taxon>Burkholderia cepacia complex</taxon>
    </lineage>
</organism>
<feature type="chain" id="PRO_1000133587" description="Biosynthetic peptidoglycan transglycosylase">
    <location>
        <begin position="1"/>
        <end position="245"/>
    </location>
</feature>
<feature type="transmembrane region" description="Helical" evidence="1">
    <location>
        <begin position="19"/>
        <end position="39"/>
    </location>
</feature>
<evidence type="ECO:0000255" key="1">
    <source>
        <dbReference type="HAMAP-Rule" id="MF_00766"/>
    </source>
</evidence>